<proteinExistence type="inferred from homology"/>
<feature type="chain" id="PRO_0000350155" description="Dual-specificity RNA methyltransferase RlmN">
    <location>
        <begin position="1"/>
        <end position="364"/>
    </location>
</feature>
<feature type="domain" description="Radical SAM core" evidence="2">
    <location>
        <begin position="102"/>
        <end position="337"/>
    </location>
</feature>
<feature type="active site" description="Proton acceptor" evidence="1">
    <location>
        <position position="91"/>
    </location>
</feature>
<feature type="active site" description="S-methylcysteine intermediate" evidence="1">
    <location>
        <position position="342"/>
    </location>
</feature>
<feature type="binding site" evidence="1">
    <location>
        <position position="116"/>
    </location>
    <ligand>
        <name>[4Fe-4S] cluster</name>
        <dbReference type="ChEBI" id="CHEBI:49883"/>
        <note>4Fe-4S-S-AdoMet</note>
    </ligand>
</feature>
<feature type="binding site" evidence="1">
    <location>
        <position position="120"/>
    </location>
    <ligand>
        <name>[4Fe-4S] cluster</name>
        <dbReference type="ChEBI" id="CHEBI:49883"/>
        <note>4Fe-4S-S-AdoMet</note>
    </ligand>
</feature>
<feature type="binding site" evidence="1">
    <location>
        <position position="123"/>
    </location>
    <ligand>
        <name>[4Fe-4S] cluster</name>
        <dbReference type="ChEBI" id="CHEBI:49883"/>
        <note>4Fe-4S-S-AdoMet</note>
    </ligand>
</feature>
<feature type="binding site" evidence="1">
    <location>
        <begin position="169"/>
        <end position="170"/>
    </location>
    <ligand>
        <name>S-adenosyl-L-methionine</name>
        <dbReference type="ChEBI" id="CHEBI:59789"/>
    </ligand>
</feature>
<feature type="binding site" evidence="1">
    <location>
        <position position="201"/>
    </location>
    <ligand>
        <name>S-adenosyl-L-methionine</name>
        <dbReference type="ChEBI" id="CHEBI:59789"/>
    </ligand>
</feature>
<feature type="binding site" evidence="1">
    <location>
        <begin position="223"/>
        <end position="225"/>
    </location>
    <ligand>
        <name>S-adenosyl-L-methionine</name>
        <dbReference type="ChEBI" id="CHEBI:59789"/>
    </ligand>
</feature>
<feature type="binding site" evidence="1">
    <location>
        <position position="299"/>
    </location>
    <ligand>
        <name>S-adenosyl-L-methionine</name>
        <dbReference type="ChEBI" id="CHEBI:59789"/>
    </ligand>
</feature>
<feature type="disulfide bond" description="(transient)" evidence="1">
    <location>
        <begin position="109"/>
        <end position="342"/>
    </location>
</feature>
<keyword id="KW-0004">4Fe-4S</keyword>
<keyword id="KW-0963">Cytoplasm</keyword>
<keyword id="KW-1015">Disulfide bond</keyword>
<keyword id="KW-0408">Iron</keyword>
<keyword id="KW-0411">Iron-sulfur</keyword>
<keyword id="KW-0479">Metal-binding</keyword>
<keyword id="KW-0489">Methyltransferase</keyword>
<keyword id="KW-1185">Reference proteome</keyword>
<keyword id="KW-0698">rRNA processing</keyword>
<keyword id="KW-0949">S-adenosyl-L-methionine</keyword>
<keyword id="KW-0808">Transferase</keyword>
<keyword id="KW-0819">tRNA processing</keyword>
<protein>
    <recommendedName>
        <fullName evidence="1">Dual-specificity RNA methyltransferase RlmN</fullName>
        <ecNumber evidence="1">2.1.1.192</ecNumber>
    </recommendedName>
    <alternativeName>
        <fullName evidence="1">23S rRNA (adenine(2503)-C(2))-methyltransferase</fullName>
    </alternativeName>
    <alternativeName>
        <fullName evidence="1">23S rRNA m2A2503 methyltransferase</fullName>
    </alternativeName>
    <alternativeName>
        <fullName evidence="1">Ribosomal RNA large subunit methyltransferase N</fullName>
    </alternativeName>
    <alternativeName>
        <fullName evidence="1">tRNA (adenine(37)-C(2))-methyltransferase</fullName>
    </alternativeName>
    <alternativeName>
        <fullName evidence="1">tRNA m2A37 methyltransferase</fullName>
    </alternativeName>
</protein>
<accession>Q727F1</accession>
<evidence type="ECO:0000255" key="1">
    <source>
        <dbReference type="HAMAP-Rule" id="MF_01849"/>
    </source>
</evidence>
<evidence type="ECO:0000255" key="2">
    <source>
        <dbReference type="PROSITE-ProRule" id="PRU01266"/>
    </source>
</evidence>
<comment type="function">
    <text evidence="1">Specifically methylates position 2 of adenine 2503 in 23S rRNA and position 2 of adenine 37 in tRNAs. m2A2503 modification seems to play a crucial role in the proofreading step occurring at the peptidyl transferase center and thus would serve to optimize ribosomal fidelity.</text>
</comment>
<comment type="catalytic activity">
    <reaction evidence="1">
        <text>adenosine(2503) in 23S rRNA + 2 reduced [2Fe-2S]-[ferredoxin] + 2 S-adenosyl-L-methionine = 2-methyladenosine(2503) in 23S rRNA + 5'-deoxyadenosine + L-methionine + 2 oxidized [2Fe-2S]-[ferredoxin] + S-adenosyl-L-homocysteine</text>
        <dbReference type="Rhea" id="RHEA:42916"/>
        <dbReference type="Rhea" id="RHEA-COMP:10000"/>
        <dbReference type="Rhea" id="RHEA-COMP:10001"/>
        <dbReference type="Rhea" id="RHEA-COMP:10152"/>
        <dbReference type="Rhea" id="RHEA-COMP:10282"/>
        <dbReference type="ChEBI" id="CHEBI:17319"/>
        <dbReference type="ChEBI" id="CHEBI:33737"/>
        <dbReference type="ChEBI" id="CHEBI:33738"/>
        <dbReference type="ChEBI" id="CHEBI:57844"/>
        <dbReference type="ChEBI" id="CHEBI:57856"/>
        <dbReference type="ChEBI" id="CHEBI:59789"/>
        <dbReference type="ChEBI" id="CHEBI:74411"/>
        <dbReference type="ChEBI" id="CHEBI:74497"/>
        <dbReference type="EC" id="2.1.1.192"/>
    </reaction>
</comment>
<comment type="catalytic activity">
    <reaction evidence="1">
        <text>adenosine(37) in tRNA + 2 reduced [2Fe-2S]-[ferredoxin] + 2 S-adenosyl-L-methionine = 2-methyladenosine(37) in tRNA + 5'-deoxyadenosine + L-methionine + 2 oxidized [2Fe-2S]-[ferredoxin] + S-adenosyl-L-homocysteine</text>
        <dbReference type="Rhea" id="RHEA:43332"/>
        <dbReference type="Rhea" id="RHEA-COMP:10000"/>
        <dbReference type="Rhea" id="RHEA-COMP:10001"/>
        <dbReference type="Rhea" id="RHEA-COMP:10162"/>
        <dbReference type="Rhea" id="RHEA-COMP:10485"/>
        <dbReference type="ChEBI" id="CHEBI:17319"/>
        <dbReference type="ChEBI" id="CHEBI:33737"/>
        <dbReference type="ChEBI" id="CHEBI:33738"/>
        <dbReference type="ChEBI" id="CHEBI:57844"/>
        <dbReference type="ChEBI" id="CHEBI:57856"/>
        <dbReference type="ChEBI" id="CHEBI:59789"/>
        <dbReference type="ChEBI" id="CHEBI:74411"/>
        <dbReference type="ChEBI" id="CHEBI:74497"/>
        <dbReference type="EC" id="2.1.1.192"/>
    </reaction>
</comment>
<comment type="cofactor">
    <cofactor evidence="1">
        <name>[4Fe-4S] cluster</name>
        <dbReference type="ChEBI" id="CHEBI:49883"/>
    </cofactor>
    <text evidence="1">Binds 1 [4Fe-4S] cluster. The cluster is coordinated with 3 cysteines and an exchangeable S-adenosyl-L-methionine.</text>
</comment>
<comment type="subcellular location">
    <subcellularLocation>
        <location evidence="1">Cytoplasm</location>
    </subcellularLocation>
</comment>
<comment type="miscellaneous">
    <text evidence="1">Reaction proceeds by a ping-pong mechanism involving intermediate methylation of a conserved cysteine residue.</text>
</comment>
<comment type="similarity">
    <text evidence="1">Belongs to the radical SAM superfamily. RlmN family.</text>
</comment>
<reference key="1">
    <citation type="journal article" date="2004" name="Nat. Biotechnol.">
        <title>The genome sequence of the anaerobic, sulfate-reducing bacterium Desulfovibrio vulgaris Hildenborough.</title>
        <authorList>
            <person name="Heidelberg J.F."/>
            <person name="Seshadri R."/>
            <person name="Haveman S.A."/>
            <person name="Hemme C.L."/>
            <person name="Paulsen I.T."/>
            <person name="Kolonay J.F."/>
            <person name="Eisen J.A."/>
            <person name="Ward N.L."/>
            <person name="Methe B.A."/>
            <person name="Brinkac L.M."/>
            <person name="Daugherty S.C."/>
            <person name="DeBoy R.T."/>
            <person name="Dodson R.J."/>
            <person name="Durkin A.S."/>
            <person name="Madupu R."/>
            <person name="Nelson W.C."/>
            <person name="Sullivan S.A."/>
            <person name="Fouts D.E."/>
            <person name="Haft D.H."/>
            <person name="Selengut J."/>
            <person name="Peterson J.D."/>
            <person name="Davidsen T.M."/>
            <person name="Zafar N."/>
            <person name="Zhou L."/>
            <person name="Radune D."/>
            <person name="Dimitrov G."/>
            <person name="Hance M."/>
            <person name="Tran K."/>
            <person name="Khouri H.M."/>
            <person name="Gill J."/>
            <person name="Utterback T.R."/>
            <person name="Feldblyum T.V."/>
            <person name="Wall J.D."/>
            <person name="Voordouw G."/>
            <person name="Fraser C.M."/>
        </authorList>
    </citation>
    <scope>NUCLEOTIDE SEQUENCE [LARGE SCALE GENOMIC DNA]</scope>
    <source>
        <strain>ATCC 29579 / DSM 644 / CCUG 34227 / NCIMB 8303 / VKM B-1760 / Hildenborough</strain>
    </source>
</reference>
<name>RLMN_NITV2</name>
<organism>
    <name type="scientific">Nitratidesulfovibrio vulgaris (strain ATCC 29579 / DSM 644 / CCUG 34227 / NCIMB 8303 / VKM B-1760 / Hildenborough)</name>
    <name type="common">Desulfovibrio vulgaris</name>
    <dbReference type="NCBI Taxonomy" id="882"/>
    <lineage>
        <taxon>Bacteria</taxon>
        <taxon>Pseudomonadati</taxon>
        <taxon>Thermodesulfobacteriota</taxon>
        <taxon>Desulfovibrionia</taxon>
        <taxon>Desulfovibrionales</taxon>
        <taxon>Desulfovibrionaceae</taxon>
        <taxon>Nitratidesulfovibrio</taxon>
    </lineage>
</organism>
<gene>
    <name evidence="1" type="primary">rlmN</name>
    <name type="ordered locus">DVU_2904</name>
</gene>
<sequence length="364" mass="40471">MTDILNLTYEELEAFMTAELGEPRFRARQVWQWLWQKCARSFDEMTNVSKATRARLAEKAVITWPEVETVQKSADGTTKFLLRLADGALVETVLIPSASREGTLRITQCLSCQVGCAMGCTFCSTGTMGFERNMTMGEILGQVLVARAHLGDSRPDHPILRNLVFMGMGEPLLNLNEVMRSLRTLNDEFGLSFSPRRITVSTCGIEKGLRELGESGLAFLAVSLHAPNQEIRKRIMPKAAHWHLDDLITALESYPLKTRERVTFEYLLLGGVNDGIEHARELVRLVSRTKGKLNLIVYNPAEGDPYDAPTPERILAFEQYLWSKNITAIIRKSKGQDIKAACGQLKASELQRGTASAGADAPEA</sequence>
<dbReference type="EC" id="2.1.1.192" evidence="1"/>
<dbReference type="EMBL" id="AE017285">
    <property type="protein sequence ID" value="AAS97376.1"/>
    <property type="molecule type" value="Genomic_DNA"/>
</dbReference>
<dbReference type="RefSeq" id="WP_010940164.1">
    <property type="nucleotide sequence ID" value="NC_002937.3"/>
</dbReference>
<dbReference type="RefSeq" id="YP_012116.1">
    <property type="nucleotide sequence ID" value="NC_002937.3"/>
</dbReference>
<dbReference type="SMR" id="Q727F1"/>
<dbReference type="STRING" id="882.DVU_2904"/>
<dbReference type="PaxDb" id="882-DVU_2904"/>
<dbReference type="EnsemblBacteria" id="AAS97376">
    <property type="protein sequence ID" value="AAS97376"/>
    <property type="gene ID" value="DVU_2904"/>
</dbReference>
<dbReference type="KEGG" id="dvu:DVU_2904"/>
<dbReference type="PATRIC" id="fig|882.5.peg.2626"/>
<dbReference type="eggNOG" id="COG0820">
    <property type="taxonomic scope" value="Bacteria"/>
</dbReference>
<dbReference type="HOGENOM" id="CLU_029101_2_0_7"/>
<dbReference type="OrthoDB" id="9793973at2"/>
<dbReference type="PhylomeDB" id="Q727F1"/>
<dbReference type="Proteomes" id="UP000002194">
    <property type="component" value="Chromosome"/>
</dbReference>
<dbReference type="GO" id="GO:0005737">
    <property type="term" value="C:cytoplasm"/>
    <property type="evidence" value="ECO:0007669"/>
    <property type="project" value="UniProtKB-SubCell"/>
</dbReference>
<dbReference type="GO" id="GO:0051539">
    <property type="term" value="F:4 iron, 4 sulfur cluster binding"/>
    <property type="evidence" value="ECO:0007669"/>
    <property type="project" value="UniProtKB-UniRule"/>
</dbReference>
<dbReference type="GO" id="GO:0046872">
    <property type="term" value="F:metal ion binding"/>
    <property type="evidence" value="ECO:0007669"/>
    <property type="project" value="UniProtKB-KW"/>
</dbReference>
<dbReference type="GO" id="GO:0070040">
    <property type="term" value="F:rRNA (adenine(2503)-C2-)-methyltransferase activity"/>
    <property type="evidence" value="ECO:0007669"/>
    <property type="project" value="UniProtKB-UniRule"/>
</dbReference>
<dbReference type="GO" id="GO:0019843">
    <property type="term" value="F:rRNA binding"/>
    <property type="evidence" value="ECO:0007669"/>
    <property type="project" value="UniProtKB-UniRule"/>
</dbReference>
<dbReference type="GO" id="GO:0002935">
    <property type="term" value="F:tRNA (adenine(37)-C2)-methyltransferase activity"/>
    <property type="evidence" value="ECO:0007669"/>
    <property type="project" value="UniProtKB-UniRule"/>
</dbReference>
<dbReference type="GO" id="GO:0000049">
    <property type="term" value="F:tRNA binding"/>
    <property type="evidence" value="ECO:0007669"/>
    <property type="project" value="UniProtKB-UniRule"/>
</dbReference>
<dbReference type="GO" id="GO:0070475">
    <property type="term" value="P:rRNA base methylation"/>
    <property type="evidence" value="ECO:0007669"/>
    <property type="project" value="UniProtKB-UniRule"/>
</dbReference>
<dbReference type="GO" id="GO:0030488">
    <property type="term" value="P:tRNA methylation"/>
    <property type="evidence" value="ECO:0007669"/>
    <property type="project" value="UniProtKB-UniRule"/>
</dbReference>
<dbReference type="CDD" id="cd01335">
    <property type="entry name" value="Radical_SAM"/>
    <property type="match status" value="1"/>
</dbReference>
<dbReference type="FunFam" id="3.20.20.70:FF:000014">
    <property type="entry name" value="Probable dual-specificity RNA methyltransferase RlmN"/>
    <property type="match status" value="1"/>
</dbReference>
<dbReference type="Gene3D" id="1.10.150.530">
    <property type="match status" value="1"/>
</dbReference>
<dbReference type="Gene3D" id="3.20.20.70">
    <property type="entry name" value="Aldolase class I"/>
    <property type="match status" value="1"/>
</dbReference>
<dbReference type="HAMAP" id="MF_01849">
    <property type="entry name" value="RNA_methyltr_RlmN"/>
    <property type="match status" value="1"/>
</dbReference>
<dbReference type="InterPro" id="IPR013785">
    <property type="entry name" value="Aldolase_TIM"/>
</dbReference>
<dbReference type="InterPro" id="IPR040072">
    <property type="entry name" value="Methyltransferase_A"/>
</dbReference>
<dbReference type="InterPro" id="IPR048641">
    <property type="entry name" value="RlmN_N"/>
</dbReference>
<dbReference type="InterPro" id="IPR027492">
    <property type="entry name" value="RNA_MTrfase_RlmN"/>
</dbReference>
<dbReference type="InterPro" id="IPR004383">
    <property type="entry name" value="rRNA_lsu_MTrfase_RlmN/Cfr"/>
</dbReference>
<dbReference type="InterPro" id="IPR007197">
    <property type="entry name" value="rSAM"/>
</dbReference>
<dbReference type="NCBIfam" id="TIGR00048">
    <property type="entry name" value="rRNA_mod_RlmN"/>
    <property type="match status" value="1"/>
</dbReference>
<dbReference type="PANTHER" id="PTHR30544">
    <property type="entry name" value="23S RRNA METHYLTRANSFERASE"/>
    <property type="match status" value="1"/>
</dbReference>
<dbReference type="PANTHER" id="PTHR30544:SF5">
    <property type="entry name" value="RADICAL SAM CORE DOMAIN-CONTAINING PROTEIN"/>
    <property type="match status" value="1"/>
</dbReference>
<dbReference type="Pfam" id="PF04055">
    <property type="entry name" value="Radical_SAM"/>
    <property type="match status" value="1"/>
</dbReference>
<dbReference type="Pfam" id="PF21016">
    <property type="entry name" value="RlmN_N"/>
    <property type="match status" value="1"/>
</dbReference>
<dbReference type="PIRSF" id="PIRSF006004">
    <property type="entry name" value="CHP00048"/>
    <property type="match status" value="1"/>
</dbReference>
<dbReference type="SFLD" id="SFLDF00275">
    <property type="entry name" value="adenosine_C2_methyltransferase"/>
    <property type="match status" value="1"/>
</dbReference>
<dbReference type="SFLD" id="SFLDS00029">
    <property type="entry name" value="Radical_SAM"/>
    <property type="match status" value="1"/>
</dbReference>
<dbReference type="SUPFAM" id="SSF102114">
    <property type="entry name" value="Radical SAM enzymes"/>
    <property type="match status" value="1"/>
</dbReference>
<dbReference type="PROSITE" id="PS51918">
    <property type="entry name" value="RADICAL_SAM"/>
    <property type="match status" value="1"/>
</dbReference>